<dbReference type="EC" id="4.2.1.82" evidence="2 4"/>
<dbReference type="EMBL" id="U14003">
    <property type="protein sequence ID" value="AAA97193.1"/>
    <property type="molecule type" value="Genomic_DNA"/>
</dbReference>
<dbReference type="EMBL" id="U00096">
    <property type="protein sequence ID" value="AAC77253.1"/>
    <property type="molecule type" value="Genomic_DNA"/>
</dbReference>
<dbReference type="EMBL" id="AP009048">
    <property type="protein sequence ID" value="BAE78288.1"/>
    <property type="molecule type" value="Genomic_DNA"/>
</dbReference>
<dbReference type="PIR" id="C65243">
    <property type="entry name" value="C65243"/>
</dbReference>
<dbReference type="RefSeq" id="NP_418717.1">
    <property type="nucleotide sequence ID" value="NC_000913.3"/>
</dbReference>
<dbReference type="RefSeq" id="WP_000116326.1">
    <property type="nucleotide sequence ID" value="NZ_SSUV01000012.1"/>
</dbReference>
<dbReference type="SMR" id="P39358"/>
<dbReference type="BioGRID" id="4260973">
    <property type="interactions" value="14"/>
</dbReference>
<dbReference type="BioGRID" id="851170">
    <property type="interactions" value="1"/>
</dbReference>
<dbReference type="FunCoup" id="P39358">
    <property type="interactions" value="101"/>
</dbReference>
<dbReference type="IntAct" id="P39358">
    <property type="interactions" value="4"/>
</dbReference>
<dbReference type="STRING" id="511145.b4297"/>
<dbReference type="jPOST" id="P39358"/>
<dbReference type="PaxDb" id="511145-b4297"/>
<dbReference type="EnsemblBacteria" id="AAC77253">
    <property type="protein sequence ID" value="AAC77253"/>
    <property type="gene ID" value="b4297"/>
</dbReference>
<dbReference type="GeneID" id="946829"/>
<dbReference type="KEGG" id="ecj:JW4259"/>
<dbReference type="KEGG" id="eco:b4297"/>
<dbReference type="KEGG" id="ecoc:C3026_23185"/>
<dbReference type="PATRIC" id="fig|1411691.4.peg.2400"/>
<dbReference type="EchoBASE" id="EB2437"/>
<dbReference type="eggNOG" id="COG0129">
    <property type="taxonomic scope" value="Bacteria"/>
</dbReference>
<dbReference type="HOGENOM" id="CLU_014271_5_0_6"/>
<dbReference type="InParanoid" id="P39358"/>
<dbReference type="OMA" id="LAWQFNT"/>
<dbReference type="OrthoDB" id="9807077at2"/>
<dbReference type="PhylomeDB" id="P39358"/>
<dbReference type="BioCyc" id="EcoCyc:G7910-MONOMER"/>
<dbReference type="BioCyc" id="MetaCyc:G7910-MONOMER"/>
<dbReference type="BRENDA" id="4.2.1.82">
    <property type="organism ID" value="2026"/>
</dbReference>
<dbReference type="PRO" id="PR:P39358"/>
<dbReference type="Proteomes" id="UP000000625">
    <property type="component" value="Chromosome"/>
</dbReference>
<dbReference type="GO" id="GO:0005829">
    <property type="term" value="C:cytosol"/>
    <property type="evidence" value="ECO:0000318"/>
    <property type="project" value="GO_Central"/>
</dbReference>
<dbReference type="GO" id="GO:0016836">
    <property type="term" value="F:hydro-lyase activity"/>
    <property type="evidence" value="ECO:0000318"/>
    <property type="project" value="GO_Central"/>
</dbReference>
<dbReference type="GO" id="GO:0050401">
    <property type="term" value="F:xylonate dehydratase activity"/>
    <property type="evidence" value="ECO:0000314"/>
    <property type="project" value="EcoCyc"/>
</dbReference>
<dbReference type="GO" id="GO:0046176">
    <property type="term" value="P:aldonic acid catabolic process"/>
    <property type="evidence" value="ECO:0000315"/>
    <property type="project" value="EcoCyc"/>
</dbReference>
<dbReference type="FunFam" id="3.50.30.80:FF:000002">
    <property type="entry name" value="Dehydratase, YjhG/YagF family"/>
    <property type="match status" value="1"/>
</dbReference>
<dbReference type="Gene3D" id="3.50.30.80">
    <property type="entry name" value="IlvD/EDD C-terminal domain-like"/>
    <property type="match status" value="1"/>
</dbReference>
<dbReference type="InterPro" id="IPR017798">
    <property type="entry name" value="Dehydratase_YjhG/YagF"/>
</dbReference>
<dbReference type="InterPro" id="IPR042096">
    <property type="entry name" value="Dihydro-acid_dehy_C"/>
</dbReference>
<dbReference type="InterPro" id="IPR020558">
    <property type="entry name" value="DiOHA_6PGluconate_deHydtase_CS"/>
</dbReference>
<dbReference type="InterPro" id="IPR056740">
    <property type="entry name" value="ILV_EDD_C"/>
</dbReference>
<dbReference type="InterPro" id="IPR000581">
    <property type="entry name" value="ILV_EDD_N"/>
</dbReference>
<dbReference type="InterPro" id="IPR037237">
    <property type="entry name" value="IlvD/EDD_N"/>
</dbReference>
<dbReference type="NCBIfam" id="TIGR03432">
    <property type="entry name" value="yjhG_yagF"/>
    <property type="match status" value="1"/>
</dbReference>
<dbReference type="PANTHER" id="PTHR43661">
    <property type="entry name" value="D-XYLONATE DEHYDRATASE"/>
    <property type="match status" value="1"/>
</dbReference>
<dbReference type="PANTHER" id="PTHR43661:SF3">
    <property type="entry name" value="D-XYLONATE DEHYDRATASE YAGF-RELATED"/>
    <property type="match status" value="1"/>
</dbReference>
<dbReference type="Pfam" id="PF24877">
    <property type="entry name" value="ILV_EDD_C"/>
    <property type="match status" value="1"/>
</dbReference>
<dbReference type="Pfam" id="PF00920">
    <property type="entry name" value="ILVD_EDD_N"/>
    <property type="match status" value="1"/>
</dbReference>
<dbReference type="SUPFAM" id="SSF143975">
    <property type="entry name" value="IlvD/EDD N-terminal domain-like"/>
    <property type="match status" value="1"/>
</dbReference>
<dbReference type="SUPFAM" id="SSF52016">
    <property type="entry name" value="LeuD/IlvD-like"/>
    <property type="match status" value="1"/>
</dbReference>
<dbReference type="PROSITE" id="PS00886">
    <property type="entry name" value="ILVD_EDD_1"/>
    <property type="match status" value="1"/>
</dbReference>
<dbReference type="PROSITE" id="PS00887">
    <property type="entry name" value="ILVD_EDD_2"/>
    <property type="match status" value="1"/>
</dbReference>
<evidence type="ECO:0000269" key="1">
    <source>
    </source>
</evidence>
<evidence type="ECO:0000269" key="2">
    <source>
    </source>
</evidence>
<evidence type="ECO:0000305" key="3"/>
<evidence type="ECO:0000305" key="4">
    <source>
    </source>
</evidence>
<evidence type="ECO:0000305" key="5">
    <source>
    </source>
</evidence>
<keyword id="KW-0456">Lyase</keyword>
<keyword id="KW-1185">Reference proteome</keyword>
<feature type="chain" id="PRO_0000103561" description="D-xylonate dehydratase YjhG">
    <location>
        <begin position="1"/>
        <end position="655"/>
    </location>
</feature>
<feature type="sequence conflict" description="In Ref. 1; AAA97193." evidence="3" ref="1">
    <original>GG</original>
    <variation>EA</variation>
    <location>
        <begin position="555"/>
        <end position="556"/>
    </location>
</feature>
<proteinExistence type="evidence at protein level"/>
<protein>
    <recommendedName>
        <fullName evidence="5">D-xylonate dehydratase YjhG</fullName>
        <ecNumber evidence="2 4">4.2.1.82</ecNumber>
    </recommendedName>
</protein>
<comment type="function">
    <text evidence="2 4">Catalyzes the dehydration of D-xylonic acid to form 2-dehydro-3-deoxy-D-pentonate.</text>
</comment>
<comment type="catalytic activity">
    <reaction evidence="2 4">
        <text>D-xylonate = 2-dehydro-3-deoxy-D-arabinonate + H2O</text>
        <dbReference type="Rhea" id="RHEA:19157"/>
        <dbReference type="ChEBI" id="CHEBI:15377"/>
        <dbReference type="ChEBI" id="CHEBI:16699"/>
        <dbReference type="ChEBI" id="CHEBI:17746"/>
        <dbReference type="EC" id="4.2.1.82"/>
    </reaction>
</comment>
<comment type="activity regulation">
    <text evidence="2">Activity is increased in the presence of Mn(+) and Mg(2+). Inhibited by thiol compounds.</text>
</comment>
<comment type="biophysicochemical properties">
    <kinetics>
        <KM evidence="2">4.88 mM for D-xylonate</KM>
        <text evidence="2">kcat is 0.33 min(-1).</text>
    </kinetics>
    <phDependence>
        <text evidence="2">Optimum pH is 8.0.</text>
    </phDependence>
    <temperatureDependence>
        <text evidence="2">Optimum temperature is 30 degrees Celsius.</text>
    </temperatureDependence>
</comment>
<comment type="disruption phenotype">
    <text evidence="1">Disruption mutant has reduced ability to catabolize D-xylonic acid. YjhG-yagF double mutant cannot use D-xylonate as the sole source of carbon.</text>
</comment>
<comment type="similarity">
    <text evidence="3">Belongs to the IlvD/Edd family.</text>
</comment>
<organism>
    <name type="scientific">Escherichia coli (strain K12)</name>
    <dbReference type="NCBI Taxonomy" id="83333"/>
    <lineage>
        <taxon>Bacteria</taxon>
        <taxon>Pseudomonadati</taxon>
        <taxon>Pseudomonadota</taxon>
        <taxon>Gammaproteobacteria</taxon>
        <taxon>Enterobacterales</taxon>
        <taxon>Enterobacteriaceae</taxon>
        <taxon>Escherichia</taxon>
    </lineage>
</organism>
<sequence>MSVRNIFADESHDIYTVRTHADGPDGELPLTAEMLINRPSGDLFGMTMNAGMGWSPDELDRDGILLLSTLGGLRGADGKPVALALHQGHYELDIQMKAAAEVIKANHALPYAVYVSDPCDGRTQGTTGMFDSLPYRNDASMVMRRLIRSLPDAKAVIGVASCDKGLPATMMALAAQHNIATVLVPGGATLPAKDGEDNGKVQTIGARFANGELSLQDARRAGCKACASSGGGCQFLGTAGTSQVVAEGLGLAIPHSALAPSGEPVWREIARASARAALNLSQKGITTREILTDKAIENAMTVHAAFGGSTNLLLHIPAIAHQAGCHIPTVDDWIRINKRVPRLVSVLPNGPVYHPTVNAFMAGGVPEVMLHLRSLGLLHEDVMTVTGSTLKENLDWWEHSERRQRFKQLLLDQEQINADEVIMSPQQAKARGLTSTITFPVGNIAPEGSVIKSTAIDPSMIDEQGIYYHKGVAKVYLSEKSAIYDIKHDKIKAGDILVIIGVGPSGTGMEETYQVTSALKHLSYGKHVSLITDARFSGVSTGACIGHVGPEALAGGPIGKLRTGDLIEIKIDCRELHGEVNFLGTRSDEQLPSQEEATAILNARPSHQDLLPDPELPDDTRLWAMLQAVSGGTWTGCIYDVNKIGAALRDFMNKN</sequence>
<name>YJHG_ECOLI</name>
<accession>P39358</accession>
<accession>Q2M618</accession>
<reference key="1">
    <citation type="journal article" date="1995" name="Nucleic Acids Res.">
        <title>Analysis of the Escherichia coli genome VI: DNA sequence of the region from 92.8 through 100 minutes.</title>
        <authorList>
            <person name="Burland V.D."/>
            <person name="Plunkett G. III"/>
            <person name="Sofia H.J."/>
            <person name="Daniels D.L."/>
            <person name="Blattner F.R."/>
        </authorList>
    </citation>
    <scope>NUCLEOTIDE SEQUENCE [LARGE SCALE GENOMIC DNA]</scope>
    <source>
        <strain>K12 / MG1655 / ATCC 47076</strain>
    </source>
</reference>
<reference key="2">
    <citation type="journal article" date="1997" name="Science">
        <title>The complete genome sequence of Escherichia coli K-12.</title>
        <authorList>
            <person name="Blattner F.R."/>
            <person name="Plunkett G. III"/>
            <person name="Bloch C.A."/>
            <person name="Perna N.T."/>
            <person name="Burland V."/>
            <person name="Riley M."/>
            <person name="Collado-Vides J."/>
            <person name="Glasner J.D."/>
            <person name="Rode C.K."/>
            <person name="Mayhew G.F."/>
            <person name="Gregor J."/>
            <person name="Davis N.W."/>
            <person name="Kirkpatrick H.A."/>
            <person name="Goeden M.A."/>
            <person name="Rose D.J."/>
            <person name="Mau B."/>
            <person name="Shao Y."/>
        </authorList>
    </citation>
    <scope>NUCLEOTIDE SEQUENCE [LARGE SCALE GENOMIC DNA]</scope>
    <scope>SEQUENCE REVISION TO 555-556</scope>
    <source>
        <strain>K12 / MG1655 / ATCC 47076</strain>
    </source>
</reference>
<reference key="3">
    <citation type="journal article" date="2006" name="Mol. Syst. Biol.">
        <title>Highly accurate genome sequences of Escherichia coli K-12 strains MG1655 and W3110.</title>
        <authorList>
            <person name="Hayashi K."/>
            <person name="Morooka N."/>
            <person name="Yamamoto Y."/>
            <person name="Fujita K."/>
            <person name="Isono K."/>
            <person name="Choi S."/>
            <person name="Ohtsubo E."/>
            <person name="Baba T."/>
            <person name="Wanner B.L."/>
            <person name="Mori H."/>
            <person name="Horiuchi T."/>
        </authorList>
    </citation>
    <scope>NUCLEOTIDE SEQUENCE [LARGE SCALE GENOMIC DNA]</scope>
    <source>
        <strain>K12 / W3110 / ATCC 27325 / DSM 5911</strain>
    </source>
</reference>
<reference key="4">
    <citation type="journal article" date="2013" name="Appl. Microbiol. Biotechnol.">
        <title>Biosynthesis of ethylene glycol in Escherichia coli.</title>
        <authorList>
            <person name="Liu H."/>
            <person name="Ramos K.R."/>
            <person name="Valdehuesa K.N."/>
            <person name="Nisola G.M."/>
            <person name="Lee W.K."/>
            <person name="Chung W.J."/>
        </authorList>
    </citation>
    <scope>FUNCTION</scope>
    <scope>CATALYTIC ACTIVITY</scope>
    <scope>DISRUPTION PHENOTYPE</scope>
    <source>
        <strain>K12 / W3110 / ATCC 27325 / DSM 5911</strain>
    </source>
</reference>
<reference key="5">
    <citation type="journal article" date="2015" name="Bioengineered">
        <title>Characterization of D-xylonate dehydratase YjhG from Escherichia coli.</title>
        <authorList>
            <person name="Jiang Y."/>
            <person name="Liu W."/>
            <person name="Cheng T."/>
            <person name="Cao Y."/>
            <person name="Zhang R."/>
            <person name="Xian M."/>
        </authorList>
    </citation>
    <scope>FUNCTION</scope>
    <scope>CATALYTIC ACTIVITY</scope>
    <scope>ACTIVITY REGULATION</scope>
    <scope>BIOPHYSICOCHEMICAL PROPERTIES</scope>
</reference>
<gene>
    <name type="primary">yjhG</name>
    <name type="ordered locus">b4297</name>
    <name type="ordered locus">JW4259</name>
</gene>